<comment type="function">
    <text>Arrestin is one of the major proteins of the ros (retinal rod outer segments); it binds to photoactivated-phosphorylated rhodopsin, thereby apparently preventing the transducin-mediated activation of phosphodiesterase.</text>
</comment>
<comment type="miscellaneous">
    <text>Arrestin binds calcium.</text>
</comment>
<comment type="similarity">
    <text evidence="1">Belongs to the arrestin family.</text>
</comment>
<proteinExistence type="evidence at transcript level"/>
<evidence type="ECO:0000305" key="1"/>
<protein>
    <recommendedName>
        <fullName>S-arrestin</fullName>
    </recommendedName>
    <alternativeName>
        <fullName>Retinal S-antigen</fullName>
        <shortName>S-AG</shortName>
    </alternativeName>
    <alternativeName>
        <fullName>Rod photoreceptor arrestin</fullName>
    </alternativeName>
</protein>
<dbReference type="EMBL" id="U30269">
    <property type="protein sequence ID" value="AAC59750.1"/>
    <property type="molecule type" value="mRNA"/>
</dbReference>
<dbReference type="EMBL" id="X92398">
    <property type="protein sequence ID" value="CAA63135.1"/>
    <property type="molecule type" value="mRNA"/>
</dbReference>
<dbReference type="PIR" id="S68173">
    <property type="entry name" value="S68173"/>
</dbReference>
<dbReference type="SMR" id="P51479"/>
<dbReference type="GO" id="GO:0001917">
    <property type="term" value="C:photoreceptor inner segment"/>
    <property type="evidence" value="ECO:0007669"/>
    <property type="project" value="TreeGrafter"/>
</dbReference>
<dbReference type="GO" id="GO:0001750">
    <property type="term" value="C:photoreceptor outer segment"/>
    <property type="evidence" value="ECO:0007669"/>
    <property type="project" value="TreeGrafter"/>
</dbReference>
<dbReference type="GO" id="GO:0001664">
    <property type="term" value="F:G protein-coupled receptor binding"/>
    <property type="evidence" value="ECO:0007669"/>
    <property type="project" value="TreeGrafter"/>
</dbReference>
<dbReference type="GO" id="GO:0002031">
    <property type="term" value="P:G protein-coupled receptor internalization"/>
    <property type="evidence" value="ECO:0007669"/>
    <property type="project" value="TreeGrafter"/>
</dbReference>
<dbReference type="GO" id="GO:0007165">
    <property type="term" value="P:signal transduction"/>
    <property type="evidence" value="ECO:0007669"/>
    <property type="project" value="InterPro"/>
</dbReference>
<dbReference type="GO" id="GO:0007601">
    <property type="term" value="P:visual perception"/>
    <property type="evidence" value="ECO:0007669"/>
    <property type="project" value="UniProtKB-KW"/>
</dbReference>
<dbReference type="FunFam" id="2.60.40.840:FF:000002">
    <property type="entry name" value="Arrestin 3"/>
    <property type="match status" value="1"/>
</dbReference>
<dbReference type="FunFam" id="2.60.40.640:FF:000011">
    <property type="entry name" value="S-arrestin isoform X2"/>
    <property type="match status" value="1"/>
</dbReference>
<dbReference type="Gene3D" id="2.60.40.640">
    <property type="match status" value="1"/>
</dbReference>
<dbReference type="Gene3D" id="2.60.40.840">
    <property type="match status" value="1"/>
</dbReference>
<dbReference type="InterPro" id="IPR000698">
    <property type="entry name" value="Arrestin"/>
</dbReference>
<dbReference type="InterPro" id="IPR014752">
    <property type="entry name" value="Arrestin-like_C"/>
</dbReference>
<dbReference type="InterPro" id="IPR011021">
    <property type="entry name" value="Arrestin-like_N"/>
</dbReference>
<dbReference type="InterPro" id="IPR011022">
    <property type="entry name" value="Arrestin_C-like"/>
</dbReference>
<dbReference type="InterPro" id="IPR017864">
    <property type="entry name" value="Arrestin_CS"/>
</dbReference>
<dbReference type="InterPro" id="IPR014753">
    <property type="entry name" value="Arrestin_N"/>
</dbReference>
<dbReference type="InterPro" id="IPR014756">
    <property type="entry name" value="Ig_E-set"/>
</dbReference>
<dbReference type="PANTHER" id="PTHR11792">
    <property type="entry name" value="ARRESTIN"/>
    <property type="match status" value="1"/>
</dbReference>
<dbReference type="PANTHER" id="PTHR11792:SF15">
    <property type="entry name" value="S-ARRESTIN"/>
    <property type="match status" value="1"/>
</dbReference>
<dbReference type="Pfam" id="PF02752">
    <property type="entry name" value="Arrestin_C"/>
    <property type="match status" value="1"/>
</dbReference>
<dbReference type="Pfam" id="PF00339">
    <property type="entry name" value="Arrestin_N"/>
    <property type="match status" value="1"/>
</dbReference>
<dbReference type="PRINTS" id="PR00309">
    <property type="entry name" value="ARRESTIN"/>
</dbReference>
<dbReference type="SMART" id="SM01017">
    <property type="entry name" value="Arrestin_C"/>
    <property type="match status" value="1"/>
</dbReference>
<dbReference type="SUPFAM" id="SSF81296">
    <property type="entry name" value="E set domains"/>
    <property type="match status" value="2"/>
</dbReference>
<dbReference type="PROSITE" id="PS00295">
    <property type="entry name" value="ARRESTINS"/>
    <property type="match status" value="1"/>
</dbReference>
<reference key="1">
    <citation type="journal article" date="1995" name="Eur. J. Biochem.">
        <title>The sequence of arrestins from rod and cone photoreceptors in the frogs Rana catesbeiana and Rana pipiens. Localization of gene transcripts by reverse-transcription polymerase chain reaction on isolated photoreceptors.</title>
        <authorList>
            <person name="Abdulaeva G."/>
            <person name="Hargrave P.A."/>
            <person name="Smith W.C."/>
        </authorList>
    </citation>
    <scope>NUCLEOTIDE SEQUENCE [MRNA]</scope>
    <source>
        <tissue>Retina</tissue>
    </source>
</reference>
<organism>
    <name type="scientific">Lithobates pipiens</name>
    <name type="common">Northern leopard frog</name>
    <name type="synonym">Rana pipiens</name>
    <dbReference type="NCBI Taxonomy" id="8404"/>
    <lineage>
        <taxon>Eukaryota</taxon>
        <taxon>Metazoa</taxon>
        <taxon>Chordata</taxon>
        <taxon>Craniata</taxon>
        <taxon>Vertebrata</taxon>
        <taxon>Euteleostomi</taxon>
        <taxon>Amphibia</taxon>
        <taxon>Batrachia</taxon>
        <taxon>Anura</taxon>
        <taxon>Neobatrachia</taxon>
        <taxon>Ranoidea</taxon>
        <taxon>Ranidae</taxon>
        <taxon>Lithobates</taxon>
    </lineage>
</organism>
<keyword id="KW-0106">Calcium</keyword>
<keyword id="KW-0716">Sensory transduction</keyword>
<keyword id="KW-0844">Vision</keyword>
<accession>P51479</accession>
<name>ARRS_LITPI</name>
<feature type="chain" id="PRO_0000205191" description="S-arrestin">
    <location>
        <begin position="1"/>
        <end position="396"/>
    </location>
</feature>
<sequence>MSGDKKSRSVIYKKTSRDKAVSVYLGKRDYVDHIESVDPVDGVVFVDPDLLKGKKVYVTLTCAFRYGNEDIDVIGLTFRKDLFFARIQVYPPVEDVKCLTKVQERLMKKLGNNAYPFVMAFPDYLPCSVSLQPAMSDVNKACGVDFEIKAFSASNLEDRYHKKNSVRLLIRKIQYAPDQPGPTPRAETSWQFFMSDKPLHLTASLAKEVFYHGETITVAVTVTNNSEKTVKKISTSVEQTANVVLYSSDFYTKTVAFDESDEKVSPKSTYKHTFTLLPLLAYNREKREIALDGKLKHEDTNLASSTLLKEGIDRTVMGILVDYKIKVTLTVSGLLGDMTSSEVSTELPFILMHPKPDSGAKESEQEEDFVFEDFARDHLKDELQPEEKEEEEEDEK</sequence>